<comment type="function">
    <text evidence="1">One of the primary rRNA binding proteins, this protein initially binds near the 5'-end of the 23S rRNA. It is important during the early stages of 50S assembly. It makes multiple contacts with different domains of the 23S rRNA in the assembled 50S subunit and ribosome.</text>
</comment>
<comment type="function">
    <text evidence="1">Forms part of the polypeptide exit tunnel.</text>
</comment>
<comment type="subunit">
    <text evidence="1">Part of the 50S ribosomal subunit.</text>
</comment>
<comment type="similarity">
    <text evidence="1">Belongs to the universal ribosomal protein uL4 family.</text>
</comment>
<proteinExistence type="inferred from homology"/>
<feature type="chain" id="PRO_1000214564" description="Large ribosomal subunit protein uL4">
    <location>
        <begin position="1"/>
        <end position="219"/>
    </location>
</feature>
<feature type="region of interest" description="Disordered" evidence="2">
    <location>
        <begin position="45"/>
        <end position="103"/>
    </location>
</feature>
<feature type="compositionally biased region" description="Basic residues" evidence="2">
    <location>
        <begin position="62"/>
        <end position="73"/>
    </location>
</feature>
<keyword id="KW-1185">Reference proteome</keyword>
<keyword id="KW-0687">Ribonucleoprotein</keyword>
<keyword id="KW-0689">Ribosomal protein</keyword>
<keyword id="KW-0694">RNA-binding</keyword>
<keyword id="KW-0699">rRNA-binding</keyword>
<reference key="1">
    <citation type="journal article" date="2008" name="J. Biotechnol.">
        <title>Ultrafast pyrosequencing of Corynebacterium kroppenstedtii DSM44385 revealed insights into the physiology of a lipophilic corynebacterium that lacks mycolic acids.</title>
        <authorList>
            <person name="Tauch A."/>
            <person name="Schneider J."/>
            <person name="Szczepanowski R."/>
            <person name="Tilker A."/>
            <person name="Viehoever P."/>
            <person name="Gartemann K.-H."/>
            <person name="Arnold W."/>
            <person name="Blom J."/>
            <person name="Brinkrolf K."/>
            <person name="Brune I."/>
            <person name="Goetker S."/>
            <person name="Weisshaar B."/>
            <person name="Goesmann A."/>
            <person name="Droege M."/>
            <person name="Puehler A."/>
        </authorList>
    </citation>
    <scope>NUCLEOTIDE SEQUENCE [LARGE SCALE GENOMIC DNA]</scope>
    <source>
        <strain>DSM 44385 / JCM 11950 / CIP 105744 / CCUG 35717</strain>
    </source>
</reference>
<gene>
    <name evidence="1" type="primary">rplD</name>
    <name type="ordered locus">ckrop_1836</name>
</gene>
<protein>
    <recommendedName>
        <fullName evidence="1">Large ribosomal subunit protein uL4</fullName>
    </recommendedName>
    <alternativeName>
        <fullName evidence="3">50S ribosomal protein L4</fullName>
    </alternativeName>
</protein>
<sequence length="219" mass="23767">MSNLTLDVHTADGSTNGTVDLPSSVFDVEVSTPLLHQVVTAQLAARRQGTHATKTRGQVRGGGRKPYRQKGTGRARQGSIRAPQFTGGGTVHGPQPRDYDQRTPKKMKAAALRGALSDRARHDRIHVVEDLVPGQTPSTKAARTFIGRLTDRKSVLVVLGREDVNSIKSARNLPNVHILPSDQLNTYDVLNSDDLVFSVEALNAFIERATGAETKEESK</sequence>
<evidence type="ECO:0000255" key="1">
    <source>
        <dbReference type="HAMAP-Rule" id="MF_01328"/>
    </source>
</evidence>
<evidence type="ECO:0000256" key="2">
    <source>
        <dbReference type="SAM" id="MobiDB-lite"/>
    </source>
</evidence>
<evidence type="ECO:0000305" key="3"/>
<organism>
    <name type="scientific">Corynebacterium kroppenstedtii (strain DSM 44385 / JCM 11950 / CIP 105744 / CCUG 35717)</name>
    <dbReference type="NCBI Taxonomy" id="645127"/>
    <lineage>
        <taxon>Bacteria</taxon>
        <taxon>Bacillati</taxon>
        <taxon>Actinomycetota</taxon>
        <taxon>Actinomycetes</taxon>
        <taxon>Mycobacteriales</taxon>
        <taxon>Corynebacteriaceae</taxon>
        <taxon>Corynebacterium</taxon>
    </lineage>
</organism>
<name>RL4_CORK4</name>
<accession>C4LL51</accession>
<dbReference type="EMBL" id="CP001620">
    <property type="protein sequence ID" value="ACR18556.1"/>
    <property type="molecule type" value="Genomic_DNA"/>
</dbReference>
<dbReference type="RefSeq" id="WP_012732443.1">
    <property type="nucleotide sequence ID" value="NC_012704.1"/>
</dbReference>
<dbReference type="SMR" id="C4LL51"/>
<dbReference type="STRING" id="645127.ckrop_1836"/>
<dbReference type="KEGG" id="ckp:ckrop_1836"/>
<dbReference type="eggNOG" id="COG0088">
    <property type="taxonomic scope" value="Bacteria"/>
</dbReference>
<dbReference type="HOGENOM" id="CLU_041575_5_0_11"/>
<dbReference type="OrthoDB" id="9803201at2"/>
<dbReference type="Proteomes" id="UP000001473">
    <property type="component" value="Chromosome"/>
</dbReference>
<dbReference type="GO" id="GO:1990904">
    <property type="term" value="C:ribonucleoprotein complex"/>
    <property type="evidence" value="ECO:0007669"/>
    <property type="project" value="UniProtKB-KW"/>
</dbReference>
<dbReference type="GO" id="GO:0005840">
    <property type="term" value="C:ribosome"/>
    <property type="evidence" value="ECO:0007669"/>
    <property type="project" value="UniProtKB-KW"/>
</dbReference>
<dbReference type="GO" id="GO:0019843">
    <property type="term" value="F:rRNA binding"/>
    <property type="evidence" value="ECO:0007669"/>
    <property type="project" value="UniProtKB-UniRule"/>
</dbReference>
<dbReference type="GO" id="GO:0003735">
    <property type="term" value="F:structural constituent of ribosome"/>
    <property type="evidence" value="ECO:0007669"/>
    <property type="project" value="InterPro"/>
</dbReference>
<dbReference type="GO" id="GO:0006412">
    <property type="term" value="P:translation"/>
    <property type="evidence" value="ECO:0007669"/>
    <property type="project" value="UniProtKB-UniRule"/>
</dbReference>
<dbReference type="FunFam" id="3.40.1370.10:FF:000004">
    <property type="entry name" value="50S ribosomal protein L4"/>
    <property type="match status" value="1"/>
</dbReference>
<dbReference type="Gene3D" id="3.40.1370.10">
    <property type="match status" value="1"/>
</dbReference>
<dbReference type="HAMAP" id="MF_01328_B">
    <property type="entry name" value="Ribosomal_uL4_B"/>
    <property type="match status" value="1"/>
</dbReference>
<dbReference type="InterPro" id="IPR002136">
    <property type="entry name" value="Ribosomal_uL4"/>
</dbReference>
<dbReference type="InterPro" id="IPR013005">
    <property type="entry name" value="Ribosomal_uL4-like"/>
</dbReference>
<dbReference type="InterPro" id="IPR023574">
    <property type="entry name" value="Ribosomal_uL4_dom_sf"/>
</dbReference>
<dbReference type="NCBIfam" id="TIGR03953">
    <property type="entry name" value="rplD_bact"/>
    <property type="match status" value="1"/>
</dbReference>
<dbReference type="PANTHER" id="PTHR10746">
    <property type="entry name" value="50S RIBOSOMAL PROTEIN L4"/>
    <property type="match status" value="1"/>
</dbReference>
<dbReference type="PANTHER" id="PTHR10746:SF6">
    <property type="entry name" value="LARGE RIBOSOMAL SUBUNIT PROTEIN UL4M"/>
    <property type="match status" value="1"/>
</dbReference>
<dbReference type="Pfam" id="PF00573">
    <property type="entry name" value="Ribosomal_L4"/>
    <property type="match status" value="1"/>
</dbReference>
<dbReference type="SUPFAM" id="SSF52166">
    <property type="entry name" value="Ribosomal protein L4"/>
    <property type="match status" value="1"/>
</dbReference>